<feature type="chain" id="PRO_0000078291" description="Heat shock 70 kDa protein">
    <location>
        <begin position="1" status="less than"/>
        <end position="111" status="greater than"/>
    </location>
</feature>
<feature type="non-terminal residue">
    <location>
        <position position="1"/>
    </location>
</feature>
<feature type="non-terminal residue">
    <location>
        <position position="111"/>
    </location>
</feature>
<sequence>VLLKMKEIADAYLGKKVTDVVITVPAYFNDSQRQATKDAGVIAGLNVLRIINEPNAAAIAYGLDKKVEKEKNVLIFDLGGGTFDVSILAIEDGIFEVKSTAGDTHLGGEDF</sequence>
<accession>Q05945</accession>
<name>HSP70_HYDOL</name>
<evidence type="ECO:0000305" key="1"/>
<protein>
    <recommendedName>
        <fullName>Heat shock 70 kDa protein</fullName>
    </recommendedName>
</protein>
<proteinExistence type="inferred from homology"/>
<dbReference type="EMBL" id="M84018">
    <property type="protein sequence ID" value="AAA29212.1"/>
    <property type="molecule type" value="Genomic_DNA"/>
</dbReference>
<dbReference type="PIR" id="S27005">
    <property type="entry name" value="S27005"/>
</dbReference>
<dbReference type="SMR" id="Q05945"/>
<dbReference type="GO" id="GO:0005524">
    <property type="term" value="F:ATP binding"/>
    <property type="evidence" value="ECO:0007669"/>
    <property type="project" value="UniProtKB-KW"/>
</dbReference>
<dbReference type="GO" id="GO:0140662">
    <property type="term" value="F:ATP-dependent protein folding chaperone"/>
    <property type="evidence" value="ECO:0007669"/>
    <property type="project" value="InterPro"/>
</dbReference>
<dbReference type="FunFam" id="3.30.420.40:FF:000020">
    <property type="entry name" value="Chaperone protein HscA homolog"/>
    <property type="match status" value="1"/>
</dbReference>
<dbReference type="FunFam" id="3.30.420.40:FF:000028">
    <property type="entry name" value="heat shock 70 kDa protein-like"/>
    <property type="match status" value="1"/>
</dbReference>
<dbReference type="Gene3D" id="3.30.420.40">
    <property type="match status" value="2"/>
</dbReference>
<dbReference type="InterPro" id="IPR043129">
    <property type="entry name" value="ATPase_NBD"/>
</dbReference>
<dbReference type="InterPro" id="IPR018181">
    <property type="entry name" value="Heat_shock_70_CS"/>
</dbReference>
<dbReference type="InterPro" id="IPR013126">
    <property type="entry name" value="Hsp_70_fam"/>
</dbReference>
<dbReference type="PANTHER" id="PTHR19375">
    <property type="entry name" value="HEAT SHOCK PROTEIN 70KDA"/>
    <property type="match status" value="1"/>
</dbReference>
<dbReference type="Pfam" id="PF00012">
    <property type="entry name" value="HSP70"/>
    <property type="match status" value="1"/>
</dbReference>
<dbReference type="PRINTS" id="PR00301">
    <property type="entry name" value="HEATSHOCK70"/>
</dbReference>
<dbReference type="SUPFAM" id="SSF53067">
    <property type="entry name" value="Actin-like ATPase domain"/>
    <property type="match status" value="2"/>
</dbReference>
<dbReference type="PROSITE" id="PS00329">
    <property type="entry name" value="HSP70_2"/>
    <property type="match status" value="1"/>
</dbReference>
<reference key="1">
    <citation type="journal article" date="1992" name="Eur. J. Biochem.">
        <title>Cloning and expression of a heat-inducible hsp70 gene in two species of Hydra which differ in their stress response.</title>
        <authorList>
            <person name="Gellner K."/>
            <person name="Praetzel G."/>
            <person name="Bosch T.C.G."/>
        </authorList>
    </citation>
    <scope>NUCLEOTIDE SEQUENCE [GENOMIC DNA]</scope>
</reference>
<keyword id="KW-0067">ATP-binding</keyword>
<keyword id="KW-0547">Nucleotide-binding</keyword>
<keyword id="KW-0346">Stress response</keyword>
<gene>
    <name type="primary">HSP70</name>
</gene>
<organism>
    <name type="scientific">Hydra oligactis</name>
    <name type="common">Brown hydra</name>
    <dbReference type="NCBI Taxonomy" id="6088"/>
    <lineage>
        <taxon>Eukaryota</taxon>
        <taxon>Metazoa</taxon>
        <taxon>Cnidaria</taxon>
        <taxon>Hydrozoa</taxon>
        <taxon>Hydroidolina</taxon>
        <taxon>Anthoathecata</taxon>
        <taxon>Aplanulata</taxon>
        <taxon>Hydridae</taxon>
        <taxon>Hydra</taxon>
    </lineage>
</organism>
<comment type="similarity">
    <text evidence="1">Belongs to the heat shock protein 70 family.</text>
</comment>